<comment type="catalytic activity">
    <reaction evidence="1">
        <text>D-erythro-1-(imidazol-4-yl)glycerol 3-phosphate = 3-(imidazol-4-yl)-2-oxopropyl phosphate + H2O</text>
        <dbReference type="Rhea" id="RHEA:11040"/>
        <dbReference type="ChEBI" id="CHEBI:15377"/>
        <dbReference type="ChEBI" id="CHEBI:57766"/>
        <dbReference type="ChEBI" id="CHEBI:58278"/>
        <dbReference type="EC" id="4.2.1.19"/>
    </reaction>
</comment>
<comment type="pathway">
    <text evidence="1">Amino-acid biosynthesis; L-histidine biosynthesis; L-histidine from 5-phospho-alpha-D-ribose 1-diphosphate: step 6/9.</text>
</comment>
<comment type="subcellular location">
    <subcellularLocation>
        <location evidence="1">Cytoplasm</location>
    </subcellularLocation>
</comment>
<comment type="similarity">
    <text evidence="1">Belongs to the imidazoleglycerol-phosphate dehydratase family.</text>
</comment>
<sequence length="190" mass="21120">MISKSRKTKETDITVSLDINGNGKSKIDTGVGFLDHMLDSFSKHSLIDLEITCKGDTHIDDHHSVEDIGIVLGALFAEALYPVSNMERFGSANIVMDEACVSCDLDLSNRPYLVYEVNLAGKVGQFDTELVEEFFRAFVLNARISTHIVLQRGKNRHHIIEAAFKAVAVALRRAMQKNERVGIPSTKDML</sequence>
<accession>Q30RM3</accession>
<reference key="1">
    <citation type="journal article" date="2008" name="Appl. Environ. Microbiol.">
        <title>Genome of the epsilonproteobacterial chemolithoautotroph Sulfurimonas denitrificans.</title>
        <authorList>
            <person name="Sievert S.M."/>
            <person name="Scott K.M."/>
            <person name="Klotz M.G."/>
            <person name="Chain P.S.G."/>
            <person name="Hauser L.J."/>
            <person name="Hemp J."/>
            <person name="Huegler M."/>
            <person name="Land M."/>
            <person name="Lapidus A."/>
            <person name="Larimer F.W."/>
            <person name="Lucas S."/>
            <person name="Malfatti S.A."/>
            <person name="Meyer F."/>
            <person name="Paulsen I.T."/>
            <person name="Ren Q."/>
            <person name="Simon J."/>
            <person name="Bailey K."/>
            <person name="Diaz E."/>
            <person name="Fitzpatrick K.A."/>
            <person name="Glover B."/>
            <person name="Gwatney N."/>
            <person name="Korajkic A."/>
            <person name="Long A."/>
            <person name="Mobberley J.M."/>
            <person name="Pantry S.N."/>
            <person name="Pazder G."/>
            <person name="Peterson S."/>
            <person name="Quintanilla J.D."/>
            <person name="Sprinkle R."/>
            <person name="Stephens J."/>
            <person name="Thomas P."/>
            <person name="Vaughn R."/>
            <person name="Weber M.J."/>
            <person name="Wooten L.L."/>
        </authorList>
    </citation>
    <scope>NUCLEOTIDE SEQUENCE [LARGE SCALE GENOMIC DNA]</scope>
    <source>
        <strain>ATCC 33889 / DSM 1251</strain>
    </source>
</reference>
<dbReference type="EC" id="4.2.1.19" evidence="1"/>
<dbReference type="EMBL" id="CP000153">
    <property type="protein sequence ID" value="ABB44358.1"/>
    <property type="molecule type" value="Genomic_DNA"/>
</dbReference>
<dbReference type="RefSeq" id="WP_011372710.1">
    <property type="nucleotide sequence ID" value="NC_007575.1"/>
</dbReference>
<dbReference type="SMR" id="Q30RM3"/>
<dbReference type="STRING" id="326298.Suden_1080"/>
<dbReference type="KEGG" id="tdn:Suden_1080"/>
<dbReference type="eggNOG" id="COG0131">
    <property type="taxonomic scope" value="Bacteria"/>
</dbReference>
<dbReference type="HOGENOM" id="CLU_044308_3_0_7"/>
<dbReference type="OrthoDB" id="9790411at2"/>
<dbReference type="UniPathway" id="UPA00031">
    <property type="reaction ID" value="UER00011"/>
</dbReference>
<dbReference type="Proteomes" id="UP000002714">
    <property type="component" value="Chromosome"/>
</dbReference>
<dbReference type="GO" id="GO:0005737">
    <property type="term" value="C:cytoplasm"/>
    <property type="evidence" value="ECO:0007669"/>
    <property type="project" value="UniProtKB-SubCell"/>
</dbReference>
<dbReference type="GO" id="GO:0004424">
    <property type="term" value="F:imidazoleglycerol-phosphate dehydratase activity"/>
    <property type="evidence" value="ECO:0007669"/>
    <property type="project" value="UniProtKB-UniRule"/>
</dbReference>
<dbReference type="GO" id="GO:0000105">
    <property type="term" value="P:L-histidine biosynthetic process"/>
    <property type="evidence" value="ECO:0007669"/>
    <property type="project" value="UniProtKB-UniRule"/>
</dbReference>
<dbReference type="CDD" id="cd07914">
    <property type="entry name" value="IGPD"/>
    <property type="match status" value="1"/>
</dbReference>
<dbReference type="FunFam" id="3.30.230.40:FF:000001">
    <property type="entry name" value="Imidazoleglycerol-phosphate dehydratase HisB"/>
    <property type="match status" value="1"/>
</dbReference>
<dbReference type="FunFam" id="3.30.230.40:FF:000003">
    <property type="entry name" value="Imidazoleglycerol-phosphate dehydratase HisB"/>
    <property type="match status" value="1"/>
</dbReference>
<dbReference type="Gene3D" id="3.30.230.40">
    <property type="entry name" value="Imidazole glycerol phosphate dehydratase, domain 1"/>
    <property type="match status" value="2"/>
</dbReference>
<dbReference type="HAMAP" id="MF_00076">
    <property type="entry name" value="HisB"/>
    <property type="match status" value="1"/>
</dbReference>
<dbReference type="InterPro" id="IPR038494">
    <property type="entry name" value="IGPD_sf"/>
</dbReference>
<dbReference type="InterPro" id="IPR000807">
    <property type="entry name" value="ImidazoleglycerolP_deHydtase"/>
</dbReference>
<dbReference type="InterPro" id="IPR020565">
    <property type="entry name" value="ImidazoleglycerP_deHydtase_CS"/>
</dbReference>
<dbReference type="InterPro" id="IPR020568">
    <property type="entry name" value="Ribosomal_Su5_D2-typ_SF"/>
</dbReference>
<dbReference type="NCBIfam" id="NF002111">
    <property type="entry name" value="PRK00951.2-1"/>
    <property type="match status" value="1"/>
</dbReference>
<dbReference type="NCBIfam" id="NF002114">
    <property type="entry name" value="PRK00951.2-4"/>
    <property type="match status" value="1"/>
</dbReference>
<dbReference type="PANTHER" id="PTHR23133:SF2">
    <property type="entry name" value="IMIDAZOLEGLYCEROL-PHOSPHATE DEHYDRATASE"/>
    <property type="match status" value="1"/>
</dbReference>
<dbReference type="PANTHER" id="PTHR23133">
    <property type="entry name" value="IMIDAZOLEGLYCEROL-PHOSPHATE DEHYDRATASE HIS7"/>
    <property type="match status" value="1"/>
</dbReference>
<dbReference type="Pfam" id="PF00475">
    <property type="entry name" value="IGPD"/>
    <property type="match status" value="1"/>
</dbReference>
<dbReference type="SUPFAM" id="SSF54211">
    <property type="entry name" value="Ribosomal protein S5 domain 2-like"/>
    <property type="match status" value="2"/>
</dbReference>
<dbReference type="PROSITE" id="PS00954">
    <property type="entry name" value="IGP_DEHYDRATASE_1"/>
    <property type="match status" value="1"/>
</dbReference>
<dbReference type="PROSITE" id="PS00955">
    <property type="entry name" value="IGP_DEHYDRATASE_2"/>
    <property type="match status" value="1"/>
</dbReference>
<protein>
    <recommendedName>
        <fullName evidence="1">Imidazoleglycerol-phosphate dehydratase</fullName>
        <shortName evidence="1">IGPD</shortName>
        <ecNumber evidence="1">4.2.1.19</ecNumber>
    </recommendedName>
</protein>
<proteinExistence type="inferred from homology"/>
<feature type="chain" id="PRO_1000010370" description="Imidazoleglycerol-phosphate dehydratase">
    <location>
        <begin position="1"/>
        <end position="190"/>
    </location>
</feature>
<keyword id="KW-0028">Amino-acid biosynthesis</keyword>
<keyword id="KW-0963">Cytoplasm</keyword>
<keyword id="KW-0368">Histidine biosynthesis</keyword>
<keyword id="KW-0456">Lyase</keyword>
<keyword id="KW-1185">Reference proteome</keyword>
<organism>
    <name type="scientific">Sulfurimonas denitrificans (strain ATCC 33889 / DSM 1251)</name>
    <name type="common">Thiomicrospira denitrificans (strain ATCC 33889 / DSM 1251)</name>
    <dbReference type="NCBI Taxonomy" id="326298"/>
    <lineage>
        <taxon>Bacteria</taxon>
        <taxon>Pseudomonadati</taxon>
        <taxon>Campylobacterota</taxon>
        <taxon>Epsilonproteobacteria</taxon>
        <taxon>Campylobacterales</taxon>
        <taxon>Sulfurimonadaceae</taxon>
        <taxon>Sulfurimonas</taxon>
    </lineage>
</organism>
<name>HIS7_SULDN</name>
<evidence type="ECO:0000255" key="1">
    <source>
        <dbReference type="HAMAP-Rule" id="MF_00076"/>
    </source>
</evidence>
<gene>
    <name evidence="1" type="primary">hisB</name>
    <name type="ordered locus">Suden_1080</name>
</gene>